<name>ACH1_SCHPO</name>
<dbReference type="EC" id="3.1.2.1"/>
<dbReference type="EMBL" id="CU329670">
    <property type="protein sequence ID" value="CAB52573.1"/>
    <property type="molecule type" value="Genomic_DNA"/>
</dbReference>
<dbReference type="EMBL" id="D89222">
    <property type="protein sequence ID" value="BAA13883.1"/>
    <property type="molecule type" value="mRNA"/>
</dbReference>
<dbReference type="PIR" id="T37937">
    <property type="entry name" value="T37937"/>
</dbReference>
<dbReference type="PIR" id="T43043">
    <property type="entry name" value="T43043"/>
</dbReference>
<dbReference type="RefSeq" id="NP_594811.1">
    <property type="nucleotide sequence ID" value="NM_001020240.2"/>
</dbReference>
<dbReference type="SMR" id="Q9UUJ9"/>
<dbReference type="BioGRID" id="278973">
    <property type="interactions" value="24"/>
</dbReference>
<dbReference type="FunCoup" id="Q9UUJ9">
    <property type="interactions" value="230"/>
</dbReference>
<dbReference type="STRING" id="284812.Q9UUJ9"/>
<dbReference type="SwissPalm" id="Q9UUJ9"/>
<dbReference type="PaxDb" id="4896-SPAC1952.09c.1"/>
<dbReference type="EnsemblFungi" id="SPAC1952.09c.1">
    <property type="protein sequence ID" value="SPAC1952.09c.1:pep"/>
    <property type="gene ID" value="SPAC1952.09c"/>
</dbReference>
<dbReference type="GeneID" id="2542515"/>
<dbReference type="KEGG" id="spo:2542515"/>
<dbReference type="PomBase" id="SPAC1952.09c">
    <property type="gene designation" value="ach1"/>
</dbReference>
<dbReference type="VEuPathDB" id="FungiDB:SPAC1952.09c"/>
<dbReference type="eggNOG" id="KOG2828">
    <property type="taxonomic scope" value="Eukaryota"/>
</dbReference>
<dbReference type="HOGENOM" id="CLU_019748_3_0_1"/>
<dbReference type="InParanoid" id="Q9UUJ9"/>
<dbReference type="OMA" id="SCIVPMV"/>
<dbReference type="PhylomeDB" id="Q9UUJ9"/>
<dbReference type="PRO" id="PR:Q9UUJ9"/>
<dbReference type="Proteomes" id="UP000002485">
    <property type="component" value="Chromosome I"/>
</dbReference>
<dbReference type="GO" id="GO:0005829">
    <property type="term" value="C:cytosol"/>
    <property type="evidence" value="ECO:0000250"/>
    <property type="project" value="PomBase"/>
</dbReference>
<dbReference type="GO" id="GO:0005739">
    <property type="term" value="C:mitochondrion"/>
    <property type="evidence" value="ECO:0007005"/>
    <property type="project" value="PomBase"/>
</dbReference>
<dbReference type="GO" id="GO:0008775">
    <property type="term" value="F:acetate CoA-transferase activity"/>
    <property type="evidence" value="ECO:0000318"/>
    <property type="project" value="GO_Central"/>
</dbReference>
<dbReference type="GO" id="GO:0003986">
    <property type="term" value="F:acetyl-CoA hydrolase activity"/>
    <property type="evidence" value="ECO:0000318"/>
    <property type="project" value="GO_Central"/>
</dbReference>
<dbReference type="GO" id="GO:0008260">
    <property type="term" value="F:succinyl-CoA:3-oxo-acid CoA-transferase activity"/>
    <property type="evidence" value="ECO:0000266"/>
    <property type="project" value="PomBase"/>
</dbReference>
<dbReference type="GO" id="GO:0006083">
    <property type="term" value="P:acetate metabolic process"/>
    <property type="evidence" value="ECO:0000318"/>
    <property type="project" value="GO_Central"/>
</dbReference>
<dbReference type="GO" id="GO:0019427">
    <property type="term" value="P:acetyl-CoA biosynthetic process from acetate"/>
    <property type="evidence" value="ECO:0000305"/>
    <property type="project" value="PomBase"/>
</dbReference>
<dbReference type="GO" id="GO:0006633">
    <property type="term" value="P:fatty acid biosynthetic process"/>
    <property type="evidence" value="ECO:0000255"/>
    <property type="project" value="PomBase"/>
</dbReference>
<dbReference type="FunFam" id="3.30.750.70:FF:000002">
    <property type="entry name" value="Acetyl-CoA hydrolase Ach1"/>
    <property type="match status" value="1"/>
</dbReference>
<dbReference type="FunFam" id="3.40.1080.20:FF:000001">
    <property type="entry name" value="Acetyl-CoA hydrolase Ach1"/>
    <property type="match status" value="1"/>
</dbReference>
<dbReference type="FunFam" id="3.40.1080.10:FF:000003">
    <property type="entry name" value="Acetyl-coA hydrolase Ach1"/>
    <property type="match status" value="1"/>
</dbReference>
<dbReference type="Gene3D" id="3.30.750.70">
    <property type="entry name" value="4-hydroxybutyrate coenzyme like domains"/>
    <property type="match status" value="1"/>
</dbReference>
<dbReference type="Gene3D" id="3.40.1080.20">
    <property type="entry name" value="Acetyl-CoA hydrolase/transferase C-terminal domain"/>
    <property type="match status" value="1"/>
</dbReference>
<dbReference type="Gene3D" id="3.40.1080.10">
    <property type="entry name" value="Glutaconate Coenzyme A-transferase"/>
    <property type="match status" value="1"/>
</dbReference>
<dbReference type="InterPro" id="IPR026888">
    <property type="entry name" value="AcetylCoA_hyd_C"/>
</dbReference>
<dbReference type="InterPro" id="IPR038460">
    <property type="entry name" value="AcetylCoA_hyd_C_sf"/>
</dbReference>
<dbReference type="InterPro" id="IPR046433">
    <property type="entry name" value="ActCoA_hydro"/>
</dbReference>
<dbReference type="InterPro" id="IPR003702">
    <property type="entry name" value="ActCoA_hydro_N"/>
</dbReference>
<dbReference type="InterPro" id="IPR037171">
    <property type="entry name" value="NagB/RpiA_transferase-like"/>
</dbReference>
<dbReference type="PANTHER" id="PTHR43609">
    <property type="entry name" value="ACETYL-COA HYDROLASE"/>
    <property type="match status" value="1"/>
</dbReference>
<dbReference type="PANTHER" id="PTHR43609:SF1">
    <property type="entry name" value="ACETYL-COA HYDROLASE"/>
    <property type="match status" value="1"/>
</dbReference>
<dbReference type="Pfam" id="PF13336">
    <property type="entry name" value="AcetylCoA_hyd_C"/>
    <property type="match status" value="1"/>
</dbReference>
<dbReference type="Pfam" id="PF02550">
    <property type="entry name" value="AcetylCoA_hydro"/>
    <property type="match status" value="1"/>
</dbReference>
<dbReference type="SUPFAM" id="SSF100950">
    <property type="entry name" value="NagB/RpiA/CoA transferase-like"/>
    <property type="match status" value="2"/>
</dbReference>
<feature type="chain" id="PRO_0000215522" description="Acetyl-CoA hydrolase">
    <location>
        <begin position="1"/>
        <end position="521"/>
    </location>
</feature>
<feature type="active site" description="5-glutamyl coenzyme A thioester intermediate" evidence="2">
    <location>
        <position position="301"/>
    </location>
</feature>
<feature type="binding site" evidence="2">
    <location>
        <begin position="276"/>
        <end position="280"/>
    </location>
    <ligand>
        <name>CoA</name>
        <dbReference type="ChEBI" id="CHEBI:57287"/>
    </ligand>
</feature>
<feature type="binding site" evidence="2">
    <location>
        <position position="391"/>
    </location>
    <ligand>
        <name>CoA</name>
        <dbReference type="ChEBI" id="CHEBI:57287"/>
    </ligand>
</feature>
<feature type="binding site" evidence="2">
    <location>
        <position position="395"/>
    </location>
    <ligand>
        <name>CoA</name>
        <dbReference type="ChEBI" id="CHEBI:57287"/>
    </ligand>
</feature>
<feature type="sequence conflict" description="In Ref. 2; BAA13883." evidence="3" ref="2">
    <location>
        <position position="223"/>
    </location>
</feature>
<feature type="sequence conflict" description="In Ref. 2; BAA13883." evidence="3" ref="2">
    <original>N</original>
    <variation>K</variation>
    <location>
        <position position="486"/>
    </location>
</feature>
<feature type="sequence conflict" description="In Ref. 2; BAA13883." evidence="3" ref="2">
    <original>L</original>
    <variation>P</variation>
    <location>
        <position position="511"/>
    </location>
</feature>
<feature type="sequence conflict" description="In Ref. 2; BAA13883." evidence="3" ref="2">
    <original>W</original>
    <variation>WCI</variation>
    <location>
        <position position="521"/>
    </location>
</feature>
<protein>
    <recommendedName>
        <fullName>Acetyl-CoA hydrolase</fullName>
        <ecNumber>3.1.2.1</ecNumber>
    </recommendedName>
    <alternativeName>
        <fullName>Acetyl-CoA deacylase</fullName>
        <shortName>Acetyl-CoA acylase</shortName>
    </alternativeName>
</protein>
<accession>Q9UUJ9</accession>
<accession>P78872</accession>
<reference key="1">
    <citation type="journal article" date="2002" name="Nature">
        <title>The genome sequence of Schizosaccharomyces pombe.</title>
        <authorList>
            <person name="Wood V."/>
            <person name="Gwilliam R."/>
            <person name="Rajandream M.A."/>
            <person name="Lyne M.H."/>
            <person name="Lyne R."/>
            <person name="Stewart A."/>
            <person name="Sgouros J.G."/>
            <person name="Peat N."/>
            <person name="Hayles J."/>
            <person name="Baker S.G."/>
            <person name="Basham D."/>
            <person name="Bowman S."/>
            <person name="Brooks K."/>
            <person name="Brown D."/>
            <person name="Brown S."/>
            <person name="Chillingworth T."/>
            <person name="Churcher C.M."/>
            <person name="Collins M."/>
            <person name="Connor R."/>
            <person name="Cronin A."/>
            <person name="Davis P."/>
            <person name="Feltwell T."/>
            <person name="Fraser A."/>
            <person name="Gentles S."/>
            <person name="Goble A."/>
            <person name="Hamlin N."/>
            <person name="Harris D.E."/>
            <person name="Hidalgo J."/>
            <person name="Hodgson G."/>
            <person name="Holroyd S."/>
            <person name="Hornsby T."/>
            <person name="Howarth S."/>
            <person name="Huckle E.J."/>
            <person name="Hunt S."/>
            <person name="Jagels K."/>
            <person name="James K.D."/>
            <person name="Jones L."/>
            <person name="Jones M."/>
            <person name="Leather S."/>
            <person name="McDonald S."/>
            <person name="McLean J."/>
            <person name="Mooney P."/>
            <person name="Moule S."/>
            <person name="Mungall K.L."/>
            <person name="Murphy L.D."/>
            <person name="Niblett D."/>
            <person name="Odell C."/>
            <person name="Oliver K."/>
            <person name="O'Neil S."/>
            <person name="Pearson D."/>
            <person name="Quail M.A."/>
            <person name="Rabbinowitsch E."/>
            <person name="Rutherford K.M."/>
            <person name="Rutter S."/>
            <person name="Saunders D."/>
            <person name="Seeger K."/>
            <person name="Sharp S."/>
            <person name="Skelton J."/>
            <person name="Simmonds M.N."/>
            <person name="Squares R."/>
            <person name="Squares S."/>
            <person name="Stevens K."/>
            <person name="Taylor K."/>
            <person name="Taylor R.G."/>
            <person name="Tivey A."/>
            <person name="Walsh S.V."/>
            <person name="Warren T."/>
            <person name="Whitehead S."/>
            <person name="Woodward J.R."/>
            <person name="Volckaert G."/>
            <person name="Aert R."/>
            <person name="Robben J."/>
            <person name="Grymonprez B."/>
            <person name="Weltjens I."/>
            <person name="Vanstreels E."/>
            <person name="Rieger M."/>
            <person name="Schaefer M."/>
            <person name="Mueller-Auer S."/>
            <person name="Gabel C."/>
            <person name="Fuchs M."/>
            <person name="Duesterhoeft A."/>
            <person name="Fritzc C."/>
            <person name="Holzer E."/>
            <person name="Moestl D."/>
            <person name="Hilbert H."/>
            <person name="Borzym K."/>
            <person name="Langer I."/>
            <person name="Beck A."/>
            <person name="Lehrach H."/>
            <person name="Reinhardt R."/>
            <person name="Pohl T.M."/>
            <person name="Eger P."/>
            <person name="Zimmermann W."/>
            <person name="Wedler H."/>
            <person name="Wambutt R."/>
            <person name="Purnelle B."/>
            <person name="Goffeau A."/>
            <person name="Cadieu E."/>
            <person name="Dreano S."/>
            <person name="Gloux S."/>
            <person name="Lelaure V."/>
            <person name="Mottier S."/>
            <person name="Galibert F."/>
            <person name="Aves S.J."/>
            <person name="Xiang Z."/>
            <person name="Hunt C."/>
            <person name="Moore K."/>
            <person name="Hurst S.M."/>
            <person name="Lucas M."/>
            <person name="Rochet M."/>
            <person name="Gaillardin C."/>
            <person name="Tallada V.A."/>
            <person name="Garzon A."/>
            <person name="Thode G."/>
            <person name="Daga R.R."/>
            <person name="Cruzado L."/>
            <person name="Jimenez J."/>
            <person name="Sanchez M."/>
            <person name="del Rey F."/>
            <person name="Benito J."/>
            <person name="Dominguez A."/>
            <person name="Revuelta J.L."/>
            <person name="Moreno S."/>
            <person name="Armstrong J."/>
            <person name="Forsburg S.L."/>
            <person name="Cerutti L."/>
            <person name="Lowe T."/>
            <person name="McCombie W.R."/>
            <person name="Paulsen I."/>
            <person name="Potashkin J."/>
            <person name="Shpakovski G.V."/>
            <person name="Ussery D."/>
            <person name="Barrell B.G."/>
            <person name="Nurse P."/>
        </authorList>
    </citation>
    <scope>NUCLEOTIDE SEQUENCE [LARGE SCALE GENOMIC DNA]</scope>
    <source>
        <strain>972 / ATCC 24843</strain>
    </source>
</reference>
<reference key="2">
    <citation type="journal article" date="1997" name="DNA Res.">
        <title>Identification of open reading frames in Schizosaccharomyces pombe cDNAs.</title>
        <authorList>
            <person name="Yoshioka S."/>
            <person name="Kato K."/>
            <person name="Nakai K."/>
            <person name="Okayama H."/>
            <person name="Nojima H."/>
        </authorList>
    </citation>
    <scope>NUCLEOTIDE SEQUENCE [LARGE SCALE MRNA] OF 174-521</scope>
    <source>
        <strain>PR745</strain>
    </source>
</reference>
<sequence length="521" mass="57916">MPSLLSSRIRNAEFAKKIVTDPAKLVPYFKNGDYVGWSGFTGVGYPKMIPNALARHVEENNLQGKLRFKLFVGASGGADTECKWAELNMIERRCPHQVGKPISKGINSGRIQFFDKHLSMFPQDLLYGYYTRNRESNTIDTAIIEATAITEDGGIVPGASVGASPELMQLAEKIIIEVNTAIPSFEGLHDIVEIPNPPHRTPININRVDDRIGKPYIKVDPKKVIGIVEADYGDITCANSPQDETSQAIAGHLVDFFHHEVSVGRLPKNLHPLQSGIGNIANAIIGGLAHSPFKDLEVWTEVLQDTFLPLFDSEKLRFATATSTRFSPQGFEKFYSNYDYYKERILLRPQVISNHPEIIRRLGCIAMNTPVEADIYAHANSTNVLGSRMLNGLGGSADFLRNAKLSIMHTPSVRPSKKDPTGITCIVPMATHVDQTEHDLDILVTEQGLADLRGLSPTERAREVIDKCAHPDYKPLLREYFDIAENYCLARGAGHEPHILANAFKMQLNLLEKGTMKIDHW</sequence>
<keyword id="KW-0963">Cytoplasm</keyword>
<keyword id="KW-0378">Hydrolase</keyword>
<keyword id="KW-1185">Reference proteome</keyword>
<proteinExistence type="evidence at transcript level"/>
<organism>
    <name type="scientific">Schizosaccharomyces pombe (strain 972 / ATCC 24843)</name>
    <name type="common">Fission yeast</name>
    <dbReference type="NCBI Taxonomy" id="284812"/>
    <lineage>
        <taxon>Eukaryota</taxon>
        <taxon>Fungi</taxon>
        <taxon>Dikarya</taxon>
        <taxon>Ascomycota</taxon>
        <taxon>Taphrinomycotina</taxon>
        <taxon>Schizosaccharomycetes</taxon>
        <taxon>Schizosaccharomycetales</taxon>
        <taxon>Schizosaccharomycetaceae</taxon>
        <taxon>Schizosaccharomyces</taxon>
    </lineage>
</organism>
<evidence type="ECO:0000250" key="1"/>
<evidence type="ECO:0000250" key="2">
    <source>
        <dbReference type="UniProtKB" id="B3EY95"/>
    </source>
</evidence>
<evidence type="ECO:0000305" key="3"/>
<comment type="function">
    <text evidence="1">Presumably involved in regulating the intracellular acetyl-CoA pool for fatty acid and cholesterol synthesis and fatty acid oxidation.</text>
</comment>
<comment type="catalytic activity">
    <reaction>
        <text>acetyl-CoA + H2O = acetate + CoA + H(+)</text>
        <dbReference type="Rhea" id="RHEA:20289"/>
        <dbReference type="ChEBI" id="CHEBI:15377"/>
        <dbReference type="ChEBI" id="CHEBI:15378"/>
        <dbReference type="ChEBI" id="CHEBI:30089"/>
        <dbReference type="ChEBI" id="CHEBI:57287"/>
        <dbReference type="ChEBI" id="CHEBI:57288"/>
        <dbReference type="EC" id="3.1.2.1"/>
    </reaction>
</comment>
<comment type="subcellular location">
    <subcellularLocation>
        <location evidence="1">Cytoplasm</location>
    </subcellularLocation>
</comment>
<comment type="similarity">
    <text evidence="3">Belongs to the acetyl-CoA hydrolase/transferase family.</text>
</comment>
<gene>
    <name type="primary">ach1</name>
    <name type="ORF">SPAC1952.09c</name>
</gene>